<sequence length="648" mass="70618">MTPLLELKDIRRSYPAGDEQVEVLKGISLDIYAGEMVAIVGASGSGKSTLMNILGCLDKATSGTYRVAGQDVATLDADALAQLRREHFGFIFQRYHLLSHLTAEQNVEVPAVYAGLERKQRLLRAQELLQRLGLEDRTEYYPAQLSGGQQQRVSIARALMNGGQVILADEPTGALDSHSGEEVMAILHQLRDRGHTVIIVTHDPQVAAQAERVIEIRDGEIVRNPPAVEKVNATGGTEPVVNTASGWRQFVSGFNEALTMAWRALAANKMRTLLTMLGIIIGIASVVSIVVVGDAAKQMVLADIRSIGTNTIDVYPGNDFGDDDPQYQQALKYDDLIAIQKQPWVASATPAVSQNLRLRYNNVDVAASANGVSGDYFNVYGMTFSEGNTFNQEQLNGRAQVVVLDSNTRRQLFPHKADVVGEVILVGNMPARVIGVAEEKQSMFGSSKVLRVWLPYSTMSGRVMGQSWLNSITVRVKEGFDSAEAEQQLTRLLSLRHGKKDFFTWNMDGVLKTVEKTTRTLQLFLTLVAVISLVVGGIGVMNIMLVSVTERTREIGIRMAVGARASDVLQQFLIEAVLVCLVGGALGITLSLLIAFTLQLFLPGWEIGFSPLALLLAFLCSTVTGILFGWLPARNAARLDPVDALARE</sequence>
<gene>
    <name evidence="1" type="primary">macB</name>
    <name type="ordered locus">ECP_0894</name>
</gene>
<feature type="chain" id="PRO_0000269942" description="Macrolide export ATP-binding/permease protein MacB">
    <location>
        <begin position="1"/>
        <end position="648"/>
    </location>
</feature>
<feature type="transmembrane region" description="Helical" evidence="1">
    <location>
        <begin position="273"/>
        <end position="293"/>
    </location>
</feature>
<feature type="transmembrane region" description="Helical" evidence="1">
    <location>
        <begin position="523"/>
        <end position="543"/>
    </location>
</feature>
<feature type="transmembrane region" description="Helical" evidence="1">
    <location>
        <begin position="576"/>
        <end position="596"/>
    </location>
</feature>
<feature type="transmembrane region" description="Helical" evidence="1">
    <location>
        <begin position="611"/>
        <end position="631"/>
    </location>
</feature>
<feature type="domain" description="ABC transporter" evidence="1">
    <location>
        <begin position="5"/>
        <end position="243"/>
    </location>
</feature>
<feature type="binding site" evidence="1">
    <location>
        <begin position="41"/>
        <end position="48"/>
    </location>
    <ligand>
        <name>ATP</name>
        <dbReference type="ChEBI" id="CHEBI:30616"/>
    </ligand>
</feature>
<feature type="strand" evidence="2">
    <location>
        <begin position="311"/>
        <end position="319"/>
    </location>
</feature>
<feature type="helix" evidence="2">
    <location>
        <begin position="325"/>
        <end position="327"/>
    </location>
</feature>
<feature type="helix" evidence="2">
    <location>
        <begin position="333"/>
        <end position="340"/>
    </location>
</feature>
<feature type="strand" evidence="2">
    <location>
        <begin position="345"/>
        <end position="360"/>
    </location>
</feature>
<feature type="strand" evidence="2">
    <location>
        <begin position="363"/>
        <end position="372"/>
    </location>
</feature>
<feature type="helix" evidence="2">
    <location>
        <begin position="376"/>
        <end position="379"/>
    </location>
</feature>
<feature type="strand" evidence="2">
    <location>
        <begin position="385"/>
        <end position="387"/>
    </location>
</feature>
<feature type="helix" evidence="2">
    <location>
        <begin position="392"/>
        <end position="396"/>
    </location>
</feature>
<feature type="strand" evidence="2">
    <location>
        <begin position="401"/>
        <end position="404"/>
    </location>
</feature>
<feature type="helix" evidence="2">
    <location>
        <begin position="406"/>
        <end position="412"/>
    </location>
</feature>
<feature type="strand" evidence="2">
    <location>
        <begin position="423"/>
        <end position="426"/>
    </location>
</feature>
<feature type="strand" evidence="2">
    <location>
        <begin position="429"/>
        <end position="436"/>
    </location>
</feature>
<feature type="strand" evidence="2">
    <location>
        <begin position="451"/>
        <end position="455"/>
    </location>
</feature>
<feature type="helix" evidence="2">
    <location>
        <begin position="456"/>
        <end position="459"/>
    </location>
</feature>
<feature type="strand" evidence="2">
    <location>
        <begin position="468"/>
        <end position="476"/>
    </location>
</feature>
<feature type="helix" evidence="2">
    <location>
        <begin position="482"/>
        <end position="497"/>
    </location>
</feature>
<feature type="strand" evidence="2">
    <location>
        <begin position="502"/>
        <end position="506"/>
    </location>
</feature>
<proteinExistence type="evidence at protein level"/>
<dbReference type="EC" id="7.6.2.-" evidence="1"/>
<dbReference type="EMBL" id="CP000247">
    <property type="protein sequence ID" value="ABG68909.1"/>
    <property type="molecule type" value="Genomic_DNA"/>
</dbReference>
<dbReference type="RefSeq" id="WP_000188148.1">
    <property type="nucleotide sequence ID" value="NC_008253.1"/>
</dbReference>
<dbReference type="PDB" id="5C59">
    <property type="method" value="X-ray"/>
    <property type="resolution" value="3.00 A"/>
    <property type="chains" value="A/B/C/D/E/F/G=297-522"/>
</dbReference>
<dbReference type="PDBsum" id="5C59"/>
<dbReference type="SMR" id="Q0TJH0"/>
<dbReference type="KEGG" id="ecp:ECP_0894"/>
<dbReference type="HOGENOM" id="CLU_000604_78_2_6"/>
<dbReference type="Proteomes" id="UP000009182">
    <property type="component" value="Chromosome"/>
</dbReference>
<dbReference type="GO" id="GO:0005886">
    <property type="term" value="C:plasma membrane"/>
    <property type="evidence" value="ECO:0007669"/>
    <property type="project" value="UniProtKB-SubCell"/>
</dbReference>
<dbReference type="GO" id="GO:0005524">
    <property type="term" value="F:ATP binding"/>
    <property type="evidence" value="ECO:0007669"/>
    <property type="project" value="UniProtKB-KW"/>
</dbReference>
<dbReference type="GO" id="GO:0016887">
    <property type="term" value="F:ATP hydrolysis activity"/>
    <property type="evidence" value="ECO:0007669"/>
    <property type="project" value="InterPro"/>
</dbReference>
<dbReference type="GO" id="GO:0022857">
    <property type="term" value="F:transmembrane transporter activity"/>
    <property type="evidence" value="ECO:0007669"/>
    <property type="project" value="TreeGrafter"/>
</dbReference>
<dbReference type="GO" id="GO:0046677">
    <property type="term" value="P:response to antibiotic"/>
    <property type="evidence" value="ECO:0007669"/>
    <property type="project" value="UniProtKB-KW"/>
</dbReference>
<dbReference type="CDD" id="cd03255">
    <property type="entry name" value="ABC_MJ0796_LolCDE_FtsE"/>
    <property type="match status" value="1"/>
</dbReference>
<dbReference type="FunFam" id="3.40.50.300:FF:000032">
    <property type="entry name" value="Export ABC transporter ATP-binding protein"/>
    <property type="match status" value="1"/>
</dbReference>
<dbReference type="Gene3D" id="3.40.50.300">
    <property type="entry name" value="P-loop containing nucleotide triphosphate hydrolases"/>
    <property type="match status" value="1"/>
</dbReference>
<dbReference type="InterPro" id="IPR003593">
    <property type="entry name" value="AAA+_ATPase"/>
</dbReference>
<dbReference type="InterPro" id="IPR003838">
    <property type="entry name" value="ABC3_permease_C"/>
</dbReference>
<dbReference type="InterPro" id="IPR003439">
    <property type="entry name" value="ABC_transporter-like_ATP-bd"/>
</dbReference>
<dbReference type="InterPro" id="IPR017871">
    <property type="entry name" value="ABC_transporter-like_CS"/>
</dbReference>
<dbReference type="InterPro" id="IPR017911">
    <property type="entry name" value="MacB-like_ATP-bd"/>
</dbReference>
<dbReference type="InterPro" id="IPR025857">
    <property type="entry name" value="MacB_PCD"/>
</dbReference>
<dbReference type="InterPro" id="IPR050250">
    <property type="entry name" value="Macrolide_Exporter_MacB"/>
</dbReference>
<dbReference type="InterPro" id="IPR027417">
    <property type="entry name" value="P-loop_NTPase"/>
</dbReference>
<dbReference type="NCBIfam" id="NF007826">
    <property type="entry name" value="PRK10535.1"/>
    <property type="match status" value="1"/>
</dbReference>
<dbReference type="PANTHER" id="PTHR30572:SF7">
    <property type="entry name" value="MACROLIDE EXPORT ATP-BINDING_PERMEASE PROTEIN MACB"/>
    <property type="match status" value="1"/>
</dbReference>
<dbReference type="PANTHER" id="PTHR30572">
    <property type="entry name" value="MEMBRANE COMPONENT OF TRANSPORTER-RELATED"/>
    <property type="match status" value="1"/>
</dbReference>
<dbReference type="Pfam" id="PF00005">
    <property type="entry name" value="ABC_tran"/>
    <property type="match status" value="1"/>
</dbReference>
<dbReference type="Pfam" id="PF02687">
    <property type="entry name" value="FtsX"/>
    <property type="match status" value="1"/>
</dbReference>
<dbReference type="Pfam" id="PF12704">
    <property type="entry name" value="MacB_PCD"/>
    <property type="match status" value="1"/>
</dbReference>
<dbReference type="SMART" id="SM00382">
    <property type="entry name" value="AAA"/>
    <property type="match status" value="1"/>
</dbReference>
<dbReference type="SUPFAM" id="SSF52540">
    <property type="entry name" value="P-loop containing nucleoside triphosphate hydrolases"/>
    <property type="match status" value="1"/>
</dbReference>
<dbReference type="PROSITE" id="PS00211">
    <property type="entry name" value="ABC_TRANSPORTER_1"/>
    <property type="match status" value="1"/>
</dbReference>
<dbReference type="PROSITE" id="PS50893">
    <property type="entry name" value="ABC_TRANSPORTER_2"/>
    <property type="match status" value="1"/>
</dbReference>
<dbReference type="PROSITE" id="PS51267">
    <property type="entry name" value="MACB"/>
    <property type="match status" value="1"/>
</dbReference>
<reference key="1">
    <citation type="journal article" date="2006" name="Mol. Microbiol.">
        <title>Role of pathogenicity island-associated integrases in the genome plasticity of uropathogenic Escherichia coli strain 536.</title>
        <authorList>
            <person name="Hochhut B."/>
            <person name="Wilde C."/>
            <person name="Balling G."/>
            <person name="Middendorf B."/>
            <person name="Dobrindt U."/>
            <person name="Brzuszkiewicz E."/>
            <person name="Gottschalk G."/>
            <person name="Carniel E."/>
            <person name="Hacker J."/>
        </authorList>
    </citation>
    <scope>NUCLEOTIDE SEQUENCE [LARGE SCALE GENOMIC DNA]</scope>
    <source>
        <strain>536 / UPEC</strain>
    </source>
</reference>
<name>MACB_ECOL5</name>
<keyword id="KW-0002">3D-structure</keyword>
<keyword id="KW-0046">Antibiotic resistance</keyword>
<keyword id="KW-0067">ATP-binding</keyword>
<keyword id="KW-0997">Cell inner membrane</keyword>
<keyword id="KW-1003">Cell membrane</keyword>
<keyword id="KW-0472">Membrane</keyword>
<keyword id="KW-0547">Nucleotide-binding</keyword>
<keyword id="KW-1278">Translocase</keyword>
<keyword id="KW-0812">Transmembrane</keyword>
<keyword id="KW-1133">Transmembrane helix</keyword>
<keyword id="KW-0813">Transport</keyword>
<evidence type="ECO:0000255" key="1">
    <source>
        <dbReference type="HAMAP-Rule" id="MF_01720"/>
    </source>
</evidence>
<evidence type="ECO:0007829" key="2">
    <source>
        <dbReference type="PDB" id="5C59"/>
    </source>
</evidence>
<organism>
    <name type="scientific">Escherichia coli O6:K15:H31 (strain 536 / UPEC)</name>
    <dbReference type="NCBI Taxonomy" id="362663"/>
    <lineage>
        <taxon>Bacteria</taxon>
        <taxon>Pseudomonadati</taxon>
        <taxon>Pseudomonadota</taxon>
        <taxon>Gammaproteobacteria</taxon>
        <taxon>Enterobacterales</taxon>
        <taxon>Enterobacteriaceae</taxon>
        <taxon>Escherichia</taxon>
    </lineage>
</organism>
<comment type="function">
    <text evidence="1">Part of the tripartite efflux system MacAB-TolC. MacB is a non-canonical ABC transporter that contains transmembrane domains (TMD), which form a pore in the inner membrane, and an ATP-binding domain (NBD), which is responsible for energy generation. Confers resistance against macrolides.</text>
</comment>
<comment type="subunit">
    <text evidence="1">Homodimer. Part of the tripartite efflux system MacAB-TolC, which is composed of an inner membrane transporter, MacB, a periplasmic membrane fusion protein, MacA, and an outer membrane component, TolC. The complex forms a large protein conduit and can translocate molecules across both the inner and outer membranes. Interacts with MacA.</text>
</comment>
<comment type="subcellular location">
    <subcellularLocation>
        <location evidence="1">Cell inner membrane</location>
        <topology evidence="1">Multi-pass membrane protein</topology>
    </subcellularLocation>
</comment>
<comment type="similarity">
    <text evidence="1">Belongs to the ABC transporter superfamily. Macrolide exporter (TC 3.A.1.122) family.</text>
</comment>
<accession>Q0TJH0</accession>
<protein>
    <recommendedName>
        <fullName evidence="1">Macrolide export ATP-binding/permease protein MacB</fullName>
        <ecNumber evidence="1">7.6.2.-</ecNumber>
    </recommendedName>
</protein>